<accession>Q168I8</accession>
<reference key="1">
    <citation type="journal article" date="2007" name="J. Bacteriol.">
        <title>The complete genome sequence of Roseobacter denitrificans reveals a mixotrophic rather than photosynthetic metabolism.</title>
        <authorList>
            <person name="Swingley W.D."/>
            <person name="Sadekar S."/>
            <person name="Mastrian S.D."/>
            <person name="Matthies H.J."/>
            <person name="Hao J."/>
            <person name="Ramos H."/>
            <person name="Acharya C.R."/>
            <person name="Conrad A.L."/>
            <person name="Taylor H.L."/>
            <person name="Dejesa L.C."/>
            <person name="Shah M.K."/>
            <person name="O'Huallachain M.E."/>
            <person name="Lince M.T."/>
            <person name="Blankenship R.E."/>
            <person name="Beatty J.T."/>
            <person name="Touchman J.W."/>
        </authorList>
    </citation>
    <scope>NUCLEOTIDE SEQUENCE [LARGE SCALE GENOMIC DNA]</scope>
    <source>
        <strain>ATCC 33942 / OCh 114</strain>
    </source>
</reference>
<comment type="function">
    <text evidence="1">Allows the formation of correctly charged Asn-tRNA(Asn) or Gln-tRNA(Gln) through the transamidation of misacylated Asp-tRNA(Asn) or Glu-tRNA(Gln) in organisms which lack either or both of asparaginyl-tRNA or glutaminyl-tRNA synthetases. The reaction takes place in the presence of glutamine and ATP through an activated phospho-Asp-tRNA(Asn) or phospho-Glu-tRNA(Gln).</text>
</comment>
<comment type="catalytic activity">
    <reaction evidence="1">
        <text>L-glutamyl-tRNA(Gln) + L-glutamine + ATP + H2O = L-glutaminyl-tRNA(Gln) + L-glutamate + ADP + phosphate + H(+)</text>
        <dbReference type="Rhea" id="RHEA:17521"/>
        <dbReference type="Rhea" id="RHEA-COMP:9681"/>
        <dbReference type="Rhea" id="RHEA-COMP:9684"/>
        <dbReference type="ChEBI" id="CHEBI:15377"/>
        <dbReference type="ChEBI" id="CHEBI:15378"/>
        <dbReference type="ChEBI" id="CHEBI:29985"/>
        <dbReference type="ChEBI" id="CHEBI:30616"/>
        <dbReference type="ChEBI" id="CHEBI:43474"/>
        <dbReference type="ChEBI" id="CHEBI:58359"/>
        <dbReference type="ChEBI" id="CHEBI:78520"/>
        <dbReference type="ChEBI" id="CHEBI:78521"/>
        <dbReference type="ChEBI" id="CHEBI:456216"/>
    </reaction>
</comment>
<comment type="catalytic activity">
    <reaction evidence="1">
        <text>L-aspartyl-tRNA(Asn) + L-glutamine + ATP + H2O = L-asparaginyl-tRNA(Asn) + L-glutamate + ADP + phosphate + 2 H(+)</text>
        <dbReference type="Rhea" id="RHEA:14513"/>
        <dbReference type="Rhea" id="RHEA-COMP:9674"/>
        <dbReference type="Rhea" id="RHEA-COMP:9677"/>
        <dbReference type="ChEBI" id="CHEBI:15377"/>
        <dbReference type="ChEBI" id="CHEBI:15378"/>
        <dbReference type="ChEBI" id="CHEBI:29985"/>
        <dbReference type="ChEBI" id="CHEBI:30616"/>
        <dbReference type="ChEBI" id="CHEBI:43474"/>
        <dbReference type="ChEBI" id="CHEBI:58359"/>
        <dbReference type="ChEBI" id="CHEBI:78515"/>
        <dbReference type="ChEBI" id="CHEBI:78516"/>
        <dbReference type="ChEBI" id="CHEBI:456216"/>
    </reaction>
</comment>
<comment type="subunit">
    <text evidence="1">Heterotrimer of A, B and C subunits.</text>
</comment>
<comment type="similarity">
    <text evidence="1">Belongs to the GatC family.</text>
</comment>
<dbReference type="EC" id="6.3.5.-" evidence="1"/>
<dbReference type="EMBL" id="CP000362">
    <property type="protein sequence ID" value="ABG31605.1"/>
    <property type="molecule type" value="Genomic_DNA"/>
</dbReference>
<dbReference type="RefSeq" id="WP_011568222.1">
    <property type="nucleotide sequence ID" value="NC_008209.1"/>
</dbReference>
<dbReference type="SMR" id="Q168I8"/>
<dbReference type="STRING" id="375451.RD1_2001"/>
<dbReference type="KEGG" id="rde:RD1_2001"/>
<dbReference type="eggNOG" id="COG0721">
    <property type="taxonomic scope" value="Bacteria"/>
</dbReference>
<dbReference type="HOGENOM" id="CLU_105899_2_0_5"/>
<dbReference type="OrthoDB" id="9794326at2"/>
<dbReference type="Proteomes" id="UP000007029">
    <property type="component" value="Chromosome"/>
</dbReference>
<dbReference type="GO" id="GO:0050566">
    <property type="term" value="F:asparaginyl-tRNA synthase (glutamine-hydrolyzing) activity"/>
    <property type="evidence" value="ECO:0007669"/>
    <property type="project" value="RHEA"/>
</dbReference>
<dbReference type="GO" id="GO:0005524">
    <property type="term" value="F:ATP binding"/>
    <property type="evidence" value="ECO:0007669"/>
    <property type="project" value="UniProtKB-KW"/>
</dbReference>
<dbReference type="GO" id="GO:0050567">
    <property type="term" value="F:glutaminyl-tRNA synthase (glutamine-hydrolyzing) activity"/>
    <property type="evidence" value="ECO:0007669"/>
    <property type="project" value="UniProtKB-UniRule"/>
</dbReference>
<dbReference type="GO" id="GO:0070681">
    <property type="term" value="P:glutaminyl-tRNAGln biosynthesis via transamidation"/>
    <property type="evidence" value="ECO:0007669"/>
    <property type="project" value="TreeGrafter"/>
</dbReference>
<dbReference type="GO" id="GO:0006450">
    <property type="term" value="P:regulation of translational fidelity"/>
    <property type="evidence" value="ECO:0007669"/>
    <property type="project" value="InterPro"/>
</dbReference>
<dbReference type="GO" id="GO:0006412">
    <property type="term" value="P:translation"/>
    <property type="evidence" value="ECO:0007669"/>
    <property type="project" value="UniProtKB-UniRule"/>
</dbReference>
<dbReference type="Gene3D" id="1.10.20.60">
    <property type="entry name" value="Glu-tRNAGln amidotransferase C subunit, N-terminal domain"/>
    <property type="match status" value="1"/>
</dbReference>
<dbReference type="HAMAP" id="MF_00122">
    <property type="entry name" value="GatC"/>
    <property type="match status" value="1"/>
</dbReference>
<dbReference type="InterPro" id="IPR036113">
    <property type="entry name" value="Asp/Glu-ADT_sf_sub_c"/>
</dbReference>
<dbReference type="InterPro" id="IPR003837">
    <property type="entry name" value="GatC"/>
</dbReference>
<dbReference type="NCBIfam" id="TIGR00135">
    <property type="entry name" value="gatC"/>
    <property type="match status" value="1"/>
</dbReference>
<dbReference type="PANTHER" id="PTHR15004">
    <property type="entry name" value="GLUTAMYL-TRNA(GLN) AMIDOTRANSFERASE SUBUNIT C, MITOCHONDRIAL"/>
    <property type="match status" value="1"/>
</dbReference>
<dbReference type="PANTHER" id="PTHR15004:SF0">
    <property type="entry name" value="GLUTAMYL-TRNA(GLN) AMIDOTRANSFERASE SUBUNIT C, MITOCHONDRIAL"/>
    <property type="match status" value="1"/>
</dbReference>
<dbReference type="Pfam" id="PF02686">
    <property type="entry name" value="GatC"/>
    <property type="match status" value="1"/>
</dbReference>
<dbReference type="SUPFAM" id="SSF141000">
    <property type="entry name" value="Glu-tRNAGln amidotransferase C subunit"/>
    <property type="match status" value="1"/>
</dbReference>
<gene>
    <name evidence="1" type="primary">gatC</name>
    <name type="ordered locus">RD1_2001</name>
</gene>
<proteinExistence type="inferred from homology"/>
<organism>
    <name type="scientific">Roseobacter denitrificans (strain ATCC 33942 / OCh 114)</name>
    <name type="common">Erythrobacter sp. (strain OCh 114)</name>
    <name type="synonym">Roseobacter denitrificans</name>
    <dbReference type="NCBI Taxonomy" id="375451"/>
    <lineage>
        <taxon>Bacteria</taxon>
        <taxon>Pseudomonadati</taxon>
        <taxon>Pseudomonadota</taxon>
        <taxon>Alphaproteobacteria</taxon>
        <taxon>Rhodobacterales</taxon>
        <taxon>Roseobacteraceae</taxon>
        <taxon>Roseobacter</taxon>
    </lineage>
</organism>
<protein>
    <recommendedName>
        <fullName evidence="1">Aspartyl/glutamyl-tRNA(Asn/Gln) amidotransferase subunit C</fullName>
        <shortName evidence="1">Asp/Glu-ADT subunit C</shortName>
        <ecNumber evidence="1">6.3.5.-</ecNumber>
    </recommendedName>
</protein>
<sequence length="95" mass="10176">MSIDESTAARVAKLARIKVEPAALPALAGEFNTILGFIEQLNEVDIDGVEPMTSVTPQVLKRRADVVADGDQQARVLSNAPDAREGFFAVPKVVE</sequence>
<keyword id="KW-0067">ATP-binding</keyword>
<keyword id="KW-0436">Ligase</keyword>
<keyword id="KW-0547">Nucleotide-binding</keyword>
<keyword id="KW-0648">Protein biosynthesis</keyword>
<keyword id="KW-1185">Reference proteome</keyword>
<feature type="chain" id="PRO_1000016205" description="Aspartyl/glutamyl-tRNA(Asn/Gln) amidotransferase subunit C">
    <location>
        <begin position="1"/>
        <end position="95"/>
    </location>
</feature>
<evidence type="ECO:0000255" key="1">
    <source>
        <dbReference type="HAMAP-Rule" id="MF_00122"/>
    </source>
</evidence>
<name>GATC_ROSDO</name>